<sequence length="382" mass="42639">MKAVHFGAGNIGRGFIGLLLNQSGYEVTFVDINDTVIEALEVKRHYEVGFAEDGVDRIVVDRVRGVNSLKEPARVVDLIAEADLVTTAVGPSLLSKVAPLISEGLRAREVEDAPVYVIACENMIGGSAILRQEVEACGGVGEANVFFPNAAVDRIVPLQQHEDPLYVEVETFHEWVIETQGLNEQPPIQGVTWVEEIGPYIERKLFTVNTGHAIASYIGSLFGKATIDEALKDRRVRQVVQGALYETGWLLLEKYGFEAKEHSQYIQKIIKRFENPKLKDEVSRVARSPIRKLGPSDRLVKPARELMDNGIEPNELAYGIAAALHYYNPEDSESSELNLSIEEHGISSTIEKYLHLHEGDTLTQLILDQYHLIREEEKERVS</sequence>
<comment type="catalytic activity">
    <reaction evidence="1">
        <text>D-mannitol 1-phosphate + NAD(+) = beta-D-fructose 6-phosphate + NADH + H(+)</text>
        <dbReference type="Rhea" id="RHEA:19661"/>
        <dbReference type="ChEBI" id="CHEBI:15378"/>
        <dbReference type="ChEBI" id="CHEBI:57540"/>
        <dbReference type="ChEBI" id="CHEBI:57634"/>
        <dbReference type="ChEBI" id="CHEBI:57945"/>
        <dbReference type="ChEBI" id="CHEBI:61381"/>
        <dbReference type="EC" id="1.1.1.17"/>
    </reaction>
</comment>
<comment type="similarity">
    <text evidence="1">Belongs to the mannitol dehydrogenase family.</text>
</comment>
<feature type="chain" id="PRO_1000204052" description="Mannitol-1-phosphate 5-dehydrogenase">
    <location>
        <begin position="1"/>
        <end position="382"/>
    </location>
</feature>
<feature type="binding site" evidence="1">
    <location>
        <begin position="3"/>
        <end position="14"/>
    </location>
    <ligand>
        <name>NAD(+)</name>
        <dbReference type="ChEBI" id="CHEBI:57540"/>
    </ligand>
</feature>
<keyword id="KW-0520">NAD</keyword>
<keyword id="KW-0560">Oxidoreductase</keyword>
<reference key="1">
    <citation type="journal article" date="2011" name="J. Bacteriol.">
        <title>Complete genome sequence of the Thermophilic Bacterium Exiguobacterium sp. AT1b.</title>
        <authorList>
            <person name="Vishnivetskaya T.A."/>
            <person name="Lucas S."/>
            <person name="Copeland A."/>
            <person name="Lapidus A."/>
            <person name="Glavina del Rio T."/>
            <person name="Dalin E."/>
            <person name="Tice H."/>
            <person name="Bruce D.C."/>
            <person name="Goodwin L.A."/>
            <person name="Pitluck S."/>
            <person name="Saunders E."/>
            <person name="Brettin T."/>
            <person name="Detter C."/>
            <person name="Han C."/>
            <person name="Larimer F."/>
            <person name="Land M.L."/>
            <person name="Hauser L.J."/>
            <person name="Kyrpides N.C."/>
            <person name="Ovchinnikova G."/>
            <person name="Kathariou S."/>
            <person name="Ramaley R.F."/>
            <person name="Rodrigues D.F."/>
            <person name="Hendrix C."/>
            <person name="Richardson P."/>
            <person name="Tiedje J.M."/>
        </authorList>
    </citation>
    <scope>NUCLEOTIDE SEQUENCE [LARGE SCALE GENOMIC DNA]</scope>
    <source>
        <strain>ATCC BAA-1283 / AT1b</strain>
    </source>
</reference>
<proteinExistence type="inferred from homology"/>
<evidence type="ECO:0000255" key="1">
    <source>
        <dbReference type="HAMAP-Rule" id="MF_00196"/>
    </source>
</evidence>
<name>MTLD_EXISA</name>
<accession>C4L274</accession>
<protein>
    <recommendedName>
        <fullName evidence="1">Mannitol-1-phosphate 5-dehydrogenase</fullName>
        <ecNumber evidence="1">1.1.1.17</ecNumber>
    </recommendedName>
</protein>
<dbReference type="EC" id="1.1.1.17" evidence="1"/>
<dbReference type="EMBL" id="CP001615">
    <property type="protein sequence ID" value="ACQ71126.1"/>
    <property type="molecule type" value="Genomic_DNA"/>
</dbReference>
<dbReference type="RefSeq" id="WP_015880685.1">
    <property type="nucleotide sequence ID" value="NC_012673.1"/>
</dbReference>
<dbReference type="SMR" id="C4L274"/>
<dbReference type="STRING" id="360911.EAT1b_2204"/>
<dbReference type="KEGG" id="eat:EAT1b_2204"/>
<dbReference type="eggNOG" id="COG0246">
    <property type="taxonomic scope" value="Bacteria"/>
</dbReference>
<dbReference type="HOGENOM" id="CLU_036089_2_0_9"/>
<dbReference type="OrthoDB" id="271711at2"/>
<dbReference type="Proteomes" id="UP000000716">
    <property type="component" value="Chromosome"/>
</dbReference>
<dbReference type="GO" id="GO:0005829">
    <property type="term" value="C:cytosol"/>
    <property type="evidence" value="ECO:0007669"/>
    <property type="project" value="TreeGrafter"/>
</dbReference>
<dbReference type="GO" id="GO:0008926">
    <property type="term" value="F:mannitol-1-phosphate 5-dehydrogenase activity"/>
    <property type="evidence" value="ECO:0007669"/>
    <property type="project" value="UniProtKB-UniRule"/>
</dbReference>
<dbReference type="GO" id="GO:0019592">
    <property type="term" value="P:mannitol catabolic process"/>
    <property type="evidence" value="ECO:0007669"/>
    <property type="project" value="TreeGrafter"/>
</dbReference>
<dbReference type="Gene3D" id="1.10.1040.10">
    <property type="entry name" value="N-(1-d-carboxylethyl)-l-norvaline Dehydrogenase, domain 2"/>
    <property type="match status" value="1"/>
</dbReference>
<dbReference type="Gene3D" id="3.40.50.720">
    <property type="entry name" value="NAD(P)-binding Rossmann-like Domain"/>
    <property type="match status" value="1"/>
</dbReference>
<dbReference type="HAMAP" id="MF_00196">
    <property type="entry name" value="Mannitol_dehydrog"/>
    <property type="match status" value="1"/>
</dbReference>
<dbReference type="InterPro" id="IPR008927">
    <property type="entry name" value="6-PGluconate_DH-like_C_sf"/>
</dbReference>
<dbReference type="InterPro" id="IPR013328">
    <property type="entry name" value="6PGD_dom2"/>
</dbReference>
<dbReference type="InterPro" id="IPR023028">
    <property type="entry name" value="Mannitol_1_phos_5_DH"/>
</dbReference>
<dbReference type="InterPro" id="IPR000669">
    <property type="entry name" value="Mannitol_DH"/>
</dbReference>
<dbReference type="InterPro" id="IPR013118">
    <property type="entry name" value="Mannitol_DH_C"/>
</dbReference>
<dbReference type="InterPro" id="IPR023027">
    <property type="entry name" value="Mannitol_DH_CS"/>
</dbReference>
<dbReference type="InterPro" id="IPR013131">
    <property type="entry name" value="Mannitol_DH_N"/>
</dbReference>
<dbReference type="InterPro" id="IPR036291">
    <property type="entry name" value="NAD(P)-bd_dom_sf"/>
</dbReference>
<dbReference type="NCBIfam" id="NF002646">
    <property type="entry name" value="PRK02318.1-2"/>
    <property type="match status" value="1"/>
</dbReference>
<dbReference type="NCBIfam" id="NF002647">
    <property type="entry name" value="PRK02318.1-3"/>
    <property type="match status" value="1"/>
</dbReference>
<dbReference type="NCBIfam" id="NF002652">
    <property type="entry name" value="PRK02318.2-5"/>
    <property type="match status" value="1"/>
</dbReference>
<dbReference type="PANTHER" id="PTHR30524:SF0">
    <property type="entry name" value="ALTRONATE OXIDOREDUCTASE-RELATED"/>
    <property type="match status" value="1"/>
</dbReference>
<dbReference type="PANTHER" id="PTHR30524">
    <property type="entry name" value="MANNITOL-1-PHOSPHATE 5-DEHYDROGENASE"/>
    <property type="match status" value="1"/>
</dbReference>
<dbReference type="Pfam" id="PF01232">
    <property type="entry name" value="Mannitol_dh"/>
    <property type="match status" value="1"/>
</dbReference>
<dbReference type="Pfam" id="PF08125">
    <property type="entry name" value="Mannitol_dh_C"/>
    <property type="match status" value="1"/>
</dbReference>
<dbReference type="PRINTS" id="PR00084">
    <property type="entry name" value="MTLDHDRGNASE"/>
</dbReference>
<dbReference type="SUPFAM" id="SSF48179">
    <property type="entry name" value="6-phosphogluconate dehydrogenase C-terminal domain-like"/>
    <property type="match status" value="1"/>
</dbReference>
<dbReference type="SUPFAM" id="SSF51735">
    <property type="entry name" value="NAD(P)-binding Rossmann-fold domains"/>
    <property type="match status" value="1"/>
</dbReference>
<dbReference type="PROSITE" id="PS00974">
    <property type="entry name" value="MANNITOL_DHGENASE"/>
    <property type="match status" value="1"/>
</dbReference>
<gene>
    <name evidence="1" type="primary">mtlD</name>
    <name type="ordered locus">EAT1b_2204</name>
</gene>
<organism>
    <name type="scientific">Exiguobacterium sp. (strain ATCC BAA-1283 / AT1b)</name>
    <dbReference type="NCBI Taxonomy" id="360911"/>
    <lineage>
        <taxon>Bacteria</taxon>
        <taxon>Bacillati</taxon>
        <taxon>Bacillota</taxon>
        <taxon>Bacilli</taxon>
        <taxon>Bacillales</taxon>
        <taxon>Bacillales Family XII. Incertae Sedis</taxon>
        <taxon>Exiguobacterium</taxon>
    </lineage>
</organism>